<dbReference type="EMBL" id="CH474040">
    <property type="protein sequence ID" value="EDL88360.1"/>
    <property type="molecule type" value="Genomic_DNA"/>
</dbReference>
<dbReference type="RefSeq" id="NP_001100728.1">
    <property type="nucleotide sequence ID" value="NM_001107258.1"/>
</dbReference>
<dbReference type="SMR" id="D4A4K3"/>
<dbReference type="DIP" id="DIP-60850N"/>
<dbReference type="FunCoup" id="D4A4K3">
    <property type="interactions" value="3427"/>
</dbReference>
<dbReference type="IntAct" id="D4A4K3">
    <property type="interactions" value="1"/>
</dbReference>
<dbReference type="STRING" id="10116.ENSRNOP00000016274"/>
<dbReference type="PhosphoSitePlus" id="D4A4K3"/>
<dbReference type="PaxDb" id="10116-ENSRNOP00000016274"/>
<dbReference type="PeptideAtlas" id="D4A4K3"/>
<dbReference type="Ensembl" id="ENSRNOT00000016274.5">
    <property type="protein sequence ID" value="ENSRNOP00000016274.3"/>
    <property type="gene ID" value="ENSRNOG00000011873.5"/>
</dbReference>
<dbReference type="GeneID" id="305831"/>
<dbReference type="KEGG" id="rno:305831"/>
<dbReference type="UCSC" id="RGD:1304610">
    <property type="organism name" value="rat"/>
</dbReference>
<dbReference type="AGR" id="RGD:1304610"/>
<dbReference type="CTD" id="22863"/>
<dbReference type="RGD" id="1304610">
    <property type="gene designation" value="Atg14"/>
</dbReference>
<dbReference type="eggNOG" id="KOG4398">
    <property type="taxonomic scope" value="Eukaryota"/>
</dbReference>
<dbReference type="GeneTree" id="ENSGT00390000011854"/>
<dbReference type="HOGENOM" id="CLU_046719_1_0_1"/>
<dbReference type="InParanoid" id="D4A4K3"/>
<dbReference type="OMA" id="LCYSEFC"/>
<dbReference type="OrthoDB" id="16772at2759"/>
<dbReference type="PhylomeDB" id="D4A4K3"/>
<dbReference type="TreeFam" id="TF323392"/>
<dbReference type="Reactome" id="R-RNO-1632852">
    <property type="pathway name" value="Macroautophagy"/>
</dbReference>
<dbReference type="PRO" id="PR:D4A4K3"/>
<dbReference type="Proteomes" id="UP000002494">
    <property type="component" value="Chromosome 15"/>
</dbReference>
<dbReference type="Proteomes" id="UP000234681">
    <property type="component" value="Chromosome 15"/>
</dbReference>
<dbReference type="Bgee" id="ENSRNOG00000011873">
    <property type="expression patterns" value="Expressed in skeletal muscle tissue and 19 other cell types or tissues"/>
</dbReference>
<dbReference type="GO" id="GO:0005776">
    <property type="term" value="C:autophagosome"/>
    <property type="evidence" value="ECO:0000266"/>
    <property type="project" value="RGD"/>
</dbReference>
<dbReference type="GO" id="GO:0005930">
    <property type="term" value="C:axoneme"/>
    <property type="evidence" value="ECO:0000250"/>
    <property type="project" value="UniProtKB"/>
</dbReference>
<dbReference type="GO" id="GO:0005789">
    <property type="term" value="C:endoplasmic reticulum membrane"/>
    <property type="evidence" value="ECO:0007669"/>
    <property type="project" value="UniProtKB-SubCell"/>
</dbReference>
<dbReference type="GO" id="GO:0097629">
    <property type="term" value="C:extrinsic component of omegasome membrane"/>
    <property type="evidence" value="ECO:0000266"/>
    <property type="project" value="RGD"/>
</dbReference>
<dbReference type="GO" id="GO:0097632">
    <property type="term" value="C:extrinsic component of phagophore assembly site membrane"/>
    <property type="evidence" value="ECO:0000266"/>
    <property type="project" value="RGD"/>
</dbReference>
<dbReference type="GO" id="GO:0044233">
    <property type="term" value="C:mitochondria-associated endoplasmic reticulum membrane contact site"/>
    <property type="evidence" value="ECO:0000266"/>
    <property type="project" value="RGD"/>
</dbReference>
<dbReference type="GO" id="GO:0045335">
    <property type="term" value="C:phagocytic vesicle"/>
    <property type="evidence" value="ECO:0000266"/>
    <property type="project" value="RGD"/>
</dbReference>
<dbReference type="GO" id="GO:0000407">
    <property type="term" value="C:phagophore assembly site"/>
    <property type="evidence" value="ECO:0000266"/>
    <property type="project" value="RGD"/>
</dbReference>
<dbReference type="GO" id="GO:0034045">
    <property type="term" value="C:phagophore assembly site membrane"/>
    <property type="evidence" value="ECO:0000266"/>
    <property type="project" value="RGD"/>
</dbReference>
<dbReference type="GO" id="GO:0035032">
    <property type="term" value="C:phosphatidylinositol 3-kinase complex, class III"/>
    <property type="evidence" value="ECO:0000250"/>
    <property type="project" value="UniProtKB"/>
</dbReference>
<dbReference type="GO" id="GO:0051020">
    <property type="term" value="F:GTPase binding"/>
    <property type="evidence" value="ECO:0000266"/>
    <property type="project" value="RGD"/>
</dbReference>
<dbReference type="GO" id="GO:0141039">
    <property type="term" value="F:phosphatidylinositol 3-kinase inhibitor activity"/>
    <property type="evidence" value="ECO:0000266"/>
    <property type="project" value="RGD"/>
</dbReference>
<dbReference type="GO" id="GO:0035014">
    <property type="term" value="F:phosphatidylinositol 3-kinase regulator activity"/>
    <property type="evidence" value="ECO:0000318"/>
    <property type="project" value="GO_Central"/>
</dbReference>
<dbReference type="GO" id="GO:0043495">
    <property type="term" value="F:protein-membrane adaptor activity"/>
    <property type="evidence" value="ECO:0000266"/>
    <property type="project" value="RGD"/>
</dbReference>
<dbReference type="GO" id="GO:0000045">
    <property type="term" value="P:autophagosome assembly"/>
    <property type="evidence" value="ECO:0000266"/>
    <property type="project" value="RGD"/>
</dbReference>
<dbReference type="GO" id="GO:0097352">
    <property type="term" value="P:autophagosome maturation"/>
    <property type="evidence" value="ECO:0000266"/>
    <property type="project" value="RGD"/>
</dbReference>
<dbReference type="GO" id="GO:0016240">
    <property type="term" value="P:autophagosome membrane docking"/>
    <property type="evidence" value="ECO:0000266"/>
    <property type="project" value="RGD"/>
</dbReference>
<dbReference type="GO" id="GO:0006914">
    <property type="term" value="P:autophagy"/>
    <property type="evidence" value="ECO:0000266"/>
    <property type="project" value="RGD"/>
</dbReference>
<dbReference type="GO" id="GO:0042149">
    <property type="term" value="P:cellular response to glucose starvation"/>
    <property type="evidence" value="ECO:0000250"/>
    <property type="project" value="UniProtKB"/>
</dbReference>
<dbReference type="GO" id="GO:0009267">
    <property type="term" value="P:cellular response to starvation"/>
    <property type="evidence" value="ECO:0000266"/>
    <property type="project" value="RGD"/>
</dbReference>
<dbReference type="GO" id="GO:0051607">
    <property type="term" value="P:defense response to virus"/>
    <property type="evidence" value="ECO:0000266"/>
    <property type="project" value="RGD"/>
</dbReference>
<dbReference type="GO" id="GO:0045022">
    <property type="term" value="P:early endosome to late endosome transport"/>
    <property type="evidence" value="ECO:0000266"/>
    <property type="project" value="RGD"/>
</dbReference>
<dbReference type="GO" id="GO:0008333">
    <property type="term" value="P:endosome to lysosome transport"/>
    <property type="evidence" value="ECO:0000266"/>
    <property type="project" value="RGD"/>
</dbReference>
<dbReference type="GO" id="GO:0045087">
    <property type="term" value="P:innate immune response"/>
    <property type="evidence" value="ECO:0000266"/>
    <property type="project" value="RGD"/>
</dbReference>
<dbReference type="GO" id="GO:0016236">
    <property type="term" value="P:macroautophagy"/>
    <property type="evidence" value="ECO:0000266"/>
    <property type="project" value="RGD"/>
</dbReference>
<dbReference type="GO" id="GO:0000423">
    <property type="term" value="P:mitophagy"/>
    <property type="evidence" value="ECO:0000266"/>
    <property type="project" value="RGD"/>
</dbReference>
<dbReference type="GO" id="GO:0001933">
    <property type="term" value="P:negative regulation of protein phosphorylation"/>
    <property type="evidence" value="ECO:0000250"/>
    <property type="project" value="UniProtKB"/>
</dbReference>
<dbReference type="GO" id="GO:0043491">
    <property type="term" value="P:phosphatidylinositol 3-kinase/protein kinase B signal transduction"/>
    <property type="evidence" value="ECO:0000266"/>
    <property type="project" value="RGD"/>
</dbReference>
<dbReference type="GO" id="GO:0036092">
    <property type="term" value="P:phosphatidylinositol-3-phosphate biosynthetic process"/>
    <property type="evidence" value="ECO:0000266"/>
    <property type="project" value="RGD"/>
</dbReference>
<dbReference type="GO" id="GO:0001934">
    <property type="term" value="P:positive regulation of protein phosphorylation"/>
    <property type="evidence" value="ECO:0000250"/>
    <property type="project" value="UniProtKB"/>
</dbReference>
<dbReference type="GO" id="GO:0010608">
    <property type="term" value="P:post-transcriptional regulation of gene expression"/>
    <property type="evidence" value="ECO:0000266"/>
    <property type="project" value="RGD"/>
</dbReference>
<dbReference type="GO" id="GO:0016241">
    <property type="term" value="P:regulation of macroautophagy"/>
    <property type="evidence" value="ECO:0000266"/>
    <property type="project" value="RGD"/>
</dbReference>
<dbReference type="GO" id="GO:0061635">
    <property type="term" value="P:regulation of protein complex stability"/>
    <property type="evidence" value="ECO:0007669"/>
    <property type="project" value="Ensembl"/>
</dbReference>
<dbReference type="GO" id="GO:0090207">
    <property type="term" value="P:regulation of triglyceride metabolic process"/>
    <property type="evidence" value="ECO:0000266"/>
    <property type="project" value="RGD"/>
</dbReference>
<dbReference type="GO" id="GO:0098780">
    <property type="term" value="P:response to mitochondrial depolarisation"/>
    <property type="evidence" value="ECO:0000266"/>
    <property type="project" value="RGD"/>
</dbReference>
<dbReference type="InterPro" id="IPR018791">
    <property type="entry name" value="UV_resistance/autophagy_Atg14"/>
</dbReference>
<dbReference type="PANTHER" id="PTHR13664">
    <property type="entry name" value="BECLIN 1-ASSOCIATED AUTOPHAGY-RELATED KEY REGULATOR"/>
    <property type="match status" value="1"/>
</dbReference>
<dbReference type="PANTHER" id="PTHR13664:SF0">
    <property type="entry name" value="BECLIN 1-ASSOCIATED AUTOPHAGY-RELATED KEY REGULATOR"/>
    <property type="match status" value="1"/>
</dbReference>
<dbReference type="Pfam" id="PF10186">
    <property type="entry name" value="ATG14"/>
    <property type="match status" value="1"/>
</dbReference>
<comment type="function">
    <text evidence="1 2">Required for both basal and inducible autophagy. Determines the localization of the autophagy-specific PI3-kinase complex. Plays a role in autophagosome formation and MAP1LC3/LC3 conjugation to phosphatidylethanolamine. Promotes BECN1 translocation from the trans-Golgi network to autophagosomes. Enhances PIK3C3 activity in a BECN1-dependent manner. Essential for the autophagy-dependent phosphorylation of BECN1. Stimulates the phosphorylation of BECN1, but suppresses the phosphorylation PIK3C3 by AMPK. Binds to STX17-SNAP29 binary t-SNARE complex on autophagosomes and primes it for VAMP8 interaction to promote autophagosome-endolysosome fusion. Modulates the hepatic lipid metabolism (By similarity).</text>
</comment>
<comment type="subunit">
    <text evidence="1 2">Forms homooligomers; homo-oligomerization is essential for the roles in membrane tethering and enhancement of SNARE-mediated fusion. Component of the PI3K (PI3KC3/PI3K-III/class III phosphatidylinositol 3-kinase) complex I (PI3KC3-C1) in which the core composed of the catalytic subunit PIK3C3, the regulatory subunit PIK3R4 and BECN1 is associated with ATG14. PI3KC3-C1 displays a V-shaped architecture with PIK3R4 serving as a bridge between PIK3C3 and the ATG14:BECN1 subcomplex. PI3KC3-C1 can associate with further regulatory subunits. Interacts with PIK3CB. Interacts (via coiled-coil domain) with BECN2 (via coiled-coil domain); this interaction is tighter than BECN2 self-association (By similarity). Interacts with the STX17-SNAP29 binary t-SNARE complex (By similarity). Interacts with NRBF2 (By similarity). Interacts with PIK3C3 and BECN1; this interaction is increased in the absence of TMEM39A (By similarity). Interacts with STEEP1; the interaction is required for trafficking of STING1 from the endoplasmic reticulum (By similarity). Interacts with ARMC3 (via ARM domains) (By similarity).</text>
</comment>
<comment type="subcellular location">
    <subcellularLocation>
        <location evidence="1">Cytoplasm</location>
    </subcellularLocation>
    <subcellularLocation>
        <location evidence="1">Endoplasmic reticulum membrane</location>
        <topology evidence="5">Peripheral membrane protein</topology>
    </subcellularLocation>
    <subcellularLocation>
        <location evidence="1">Preautophagosomal structure membrane</location>
        <topology evidence="5">Peripheral membrane protein</topology>
    </subcellularLocation>
    <text evidence="1 2">Cytosolic under nutrient-rich conditions (By similarity). Following autophagy stimuli, such as starvation or rapamycin induction, predominantly detected in cytoplasmic foci, identified as isolation membranes and autophagosomes (By similarity). Accumulates on highly curved PtdIns(3)P enriched autophagic membrane via its BATS domain to sense and maintain membrane curvature (By similarity). Also localizes to discrete punctae along the ciliary axoneme and to the base of the ciliary axoneme (By similarity).</text>
</comment>
<comment type="domain">
    <text evidence="1">The coiled-coil domain is required for BECN1- and PIK3C3-binding and for autophagy.</text>
</comment>
<comment type="domain">
    <text evidence="1">The final 80 residues in the C-terminus define a minimum required region for autophagosome binding called BATS.</text>
</comment>
<comment type="domain">
    <text evidence="1">The N-terminal cysteine repeats are required for proper localization to the endoplasmic reticulum.</text>
</comment>
<comment type="PTM">
    <text evidence="1">Ubiquitinated via 'Lys-6', 'Lys-11' and 'Lys-63'-linked polyubiquitin chains on multiple lysines by MARCHF7, leading to ATG14 aggregation and loss of interaction with STX17.</text>
</comment>
<comment type="similarity">
    <text evidence="5">Belongs to the ATG14 family.</text>
</comment>
<organism>
    <name type="scientific">Rattus norvegicus</name>
    <name type="common">Rat</name>
    <dbReference type="NCBI Taxonomy" id="10116"/>
    <lineage>
        <taxon>Eukaryota</taxon>
        <taxon>Metazoa</taxon>
        <taxon>Chordata</taxon>
        <taxon>Craniata</taxon>
        <taxon>Vertebrata</taxon>
        <taxon>Euteleostomi</taxon>
        <taxon>Mammalia</taxon>
        <taxon>Eutheria</taxon>
        <taxon>Euarchontoglires</taxon>
        <taxon>Glires</taxon>
        <taxon>Rodentia</taxon>
        <taxon>Myomorpha</taxon>
        <taxon>Muroidea</taxon>
        <taxon>Muridae</taxon>
        <taxon>Murinae</taxon>
        <taxon>Rattus</taxon>
    </lineage>
</organism>
<keyword id="KW-0072">Autophagy</keyword>
<keyword id="KW-0175">Coiled coil</keyword>
<keyword id="KW-0963">Cytoplasm</keyword>
<keyword id="KW-0256">Endoplasmic reticulum</keyword>
<keyword id="KW-0472">Membrane</keyword>
<keyword id="KW-0597">Phosphoprotein</keyword>
<keyword id="KW-1185">Reference proteome</keyword>
<keyword id="KW-0832">Ubl conjugation</keyword>
<sequence>MASPSGKGSWTPEAPGFGPRALAPDLVDSVDDAEGLYVAVERCPLCNTTRRRLTCAKCVQSGDFVYFDGRDRERFIDKKERLSQLKNKQEEFQKEVLKAMEGKRLTDQLRWKIMSCKMRIEQLKQTICKGNEEMKKNSEGLLKNKEKNQKLYSRAQRHQEKKEKIQRHNRKLGDLVEKKTSDLREHYDRLACLRRLHILELTSVIFPMDEVKTSGRDPADVSSETDSAMTSSMVSKLAEARRTTYLSGRWVCDDHNGDTSISITGPWISLPNNGDYSAYYNWVEEKKTTQGPDMEHNNPAYTISAALGYATQLVNIVSHILDINLPKKLCNSEFCGENLSKQRLTRAVRKLNANILYLCSSQHVNLDQLQPLHTLRNLMHLVSPHSEHLGRSGPFEVRADLEESMEFVDPGVAGESDVSGDERVSDEETDLGTDWENLPSPRFCDIPSQPVEVSQSQSTQASPPIASSSAGGMISSAAASVTSWFKAYTGHR</sequence>
<proteinExistence type="inferred from homology"/>
<gene>
    <name evidence="1" type="primary">Atg14</name>
    <name evidence="1" type="synonym">Atg14L</name>
</gene>
<feature type="chain" id="PRO_0000401194" description="Beclin 1-associated autophagy-related key regulator">
    <location>
        <begin position="1"/>
        <end position="492"/>
    </location>
</feature>
<feature type="region of interest" description="Disordered" evidence="4">
    <location>
        <begin position="213"/>
        <end position="232"/>
    </location>
</feature>
<feature type="region of interest" description="Disordered" evidence="4">
    <location>
        <begin position="411"/>
        <end position="473"/>
    </location>
</feature>
<feature type="coiled-coil region" evidence="3">
    <location>
        <begin position="70"/>
        <end position="180"/>
    </location>
</feature>
<feature type="compositionally biased region" description="Polar residues" evidence="4">
    <location>
        <begin position="222"/>
        <end position="232"/>
    </location>
</feature>
<feature type="compositionally biased region" description="Acidic residues" evidence="4">
    <location>
        <begin position="424"/>
        <end position="433"/>
    </location>
</feature>
<feature type="compositionally biased region" description="Low complexity" evidence="4">
    <location>
        <begin position="447"/>
        <end position="473"/>
    </location>
</feature>
<feature type="modified residue" description="Phosphoserine" evidence="1">
    <location>
        <position position="29"/>
    </location>
</feature>
<feature type="modified residue" description="Phosphoserine" evidence="1">
    <location>
        <position position="416"/>
    </location>
</feature>
<feature type="modified residue" description="Phosphothreonine" evidence="1">
    <location>
        <position position="429"/>
    </location>
</feature>
<evidence type="ECO:0000250" key="1">
    <source>
        <dbReference type="UniProtKB" id="Q6ZNE5"/>
    </source>
</evidence>
<evidence type="ECO:0000250" key="2">
    <source>
        <dbReference type="UniProtKB" id="Q8CDJ3"/>
    </source>
</evidence>
<evidence type="ECO:0000255" key="3"/>
<evidence type="ECO:0000256" key="4">
    <source>
        <dbReference type="SAM" id="MobiDB-lite"/>
    </source>
</evidence>
<evidence type="ECO:0000305" key="5"/>
<reference key="1">
    <citation type="submission" date="2005-07" db="EMBL/GenBank/DDBJ databases">
        <authorList>
            <person name="Mural R.J."/>
            <person name="Adams M.D."/>
            <person name="Myers E.W."/>
            <person name="Smith H.O."/>
            <person name="Venter J.C."/>
        </authorList>
    </citation>
    <scope>NUCLEOTIDE SEQUENCE [LARGE SCALE GENOMIC DNA]</scope>
</reference>
<name>BAKOR_RAT</name>
<accession>D4A4K3</accession>
<protein>
    <recommendedName>
        <fullName evidence="1">Beclin 1-associated autophagy-related key regulator</fullName>
        <shortName evidence="1">Barkor</shortName>
    </recommendedName>
    <alternativeName>
        <fullName evidence="1">Autophagy-related protein 14-like protein</fullName>
        <shortName evidence="1">Atg14L</shortName>
    </alternativeName>
</protein>